<dbReference type="EMBL" id="CP000687">
    <property type="protein sequence ID" value="ABY69872.1"/>
    <property type="molecule type" value="Genomic_DNA"/>
</dbReference>
<dbReference type="RefSeq" id="WP_012263173.1">
    <property type="nucleotide sequence ID" value="NC_010278.1"/>
</dbReference>
<dbReference type="SMR" id="B0BQN7"/>
<dbReference type="KEGG" id="apj:APJL_1316"/>
<dbReference type="HOGENOM" id="CLU_030174_1_0_6"/>
<dbReference type="Proteomes" id="UP000008547">
    <property type="component" value="Chromosome"/>
</dbReference>
<dbReference type="GO" id="GO:0032153">
    <property type="term" value="C:cell division site"/>
    <property type="evidence" value="ECO:0007669"/>
    <property type="project" value="UniProtKB-UniRule"/>
</dbReference>
<dbReference type="GO" id="GO:0005886">
    <property type="term" value="C:plasma membrane"/>
    <property type="evidence" value="ECO:0007669"/>
    <property type="project" value="UniProtKB-SubCell"/>
</dbReference>
<dbReference type="GO" id="GO:0000917">
    <property type="term" value="P:division septum assembly"/>
    <property type="evidence" value="ECO:0007669"/>
    <property type="project" value="TreeGrafter"/>
</dbReference>
<dbReference type="GO" id="GO:0043093">
    <property type="term" value="P:FtsZ-dependent cytokinesis"/>
    <property type="evidence" value="ECO:0007669"/>
    <property type="project" value="UniProtKB-UniRule"/>
</dbReference>
<dbReference type="Gene3D" id="3.30.1400.10">
    <property type="entry name" value="ZipA, C-terminal FtsZ-binding domain"/>
    <property type="match status" value="1"/>
</dbReference>
<dbReference type="HAMAP" id="MF_00509">
    <property type="entry name" value="ZipA"/>
    <property type="match status" value="1"/>
</dbReference>
<dbReference type="InterPro" id="IPR011919">
    <property type="entry name" value="Cell_div_ZipA"/>
</dbReference>
<dbReference type="InterPro" id="IPR007449">
    <property type="entry name" value="ZipA_FtsZ-bd_C"/>
</dbReference>
<dbReference type="InterPro" id="IPR036765">
    <property type="entry name" value="ZipA_FtsZ-bd_C_sf"/>
</dbReference>
<dbReference type="NCBIfam" id="TIGR02205">
    <property type="entry name" value="septum_zipA"/>
    <property type="match status" value="1"/>
</dbReference>
<dbReference type="PANTHER" id="PTHR38685">
    <property type="entry name" value="CELL DIVISION PROTEIN ZIPA"/>
    <property type="match status" value="1"/>
</dbReference>
<dbReference type="PANTHER" id="PTHR38685:SF1">
    <property type="entry name" value="CELL DIVISION PROTEIN ZIPA"/>
    <property type="match status" value="1"/>
</dbReference>
<dbReference type="Pfam" id="PF04354">
    <property type="entry name" value="ZipA_C"/>
    <property type="match status" value="1"/>
</dbReference>
<dbReference type="SMART" id="SM00771">
    <property type="entry name" value="ZipA_C"/>
    <property type="match status" value="1"/>
</dbReference>
<dbReference type="SUPFAM" id="SSF64383">
    <property type="entry name" value="Cell-division protein ZipA, C-terminal domain"/>
    <property type="match status" value="1"/>
</dbReference>
<feature type="chain" id="PRO_1000127213" description="Cell division protein ZipA">
    <location>
        <begin position="1"/>
        <end position="336"/>
    </location>
</feature>
<feature type="topological domain" description="Periplasmic" evidence="1">
    <location>
        <begin position="1"/>
        <end position="2"/>
    </location>
</feature>
<feature type="transmembrane region" description="Helical" evidence="1">
    <location>
        <begin position="3"/>
        <end position="23"/>
    </location>
</feature>
<feature type="topological domain" description="Cytoplasmic" evidence="1">
    <location>
        <begin position="24"/>
        <end position="336"/>
    </location>
</feature>
<feature type="region of interest" description="Disordered" evidence="2">
    <location>
        <begin position="56"/>
        <end position="77"/>
    </location>
</feature>
<feature type="compositionally biased region" description="Polar residues" evidence="2">
    <location>
        <begin position="59"/>
        <end position="70"/>
    </location>
</feature>
<accession>B0BQN7</accession>
<keyword id="KW-0131">Cell cycle</keyword>
<keyword id="KW-0132">Cell division</keyword>
<keyword id="KW-0997">Cell inner membrane</keyword>
<keyword id="KW-1003">Cell membrane</keyword>
<keyword id="KW-0472">Membrane</keyword>
<keyword id="KW-0812">Transmembrane</keyword>
<keyword id="KW-1133">Transmembrane helix</keyword>
<gene>
    <name evidence="1" type="primary">zipA</name>
    <name type="ordered locus">APJL_1316</name>
</gene>
<sequence>MELHILFFILAGLLIAVLISFSLWSARREKSRIFSNTFSTRPPSTPINNIVSDVPPSLNPQSYAQTTGQHGETEADNPVQIQQEVESSLREIKINLPGQDSAAYQSKVEETPIYSGQPVLPVQPQYQTQVQYQTQPQHIEPAFTQAPQSPIAEATSVLEQSVEELERQAAQGDVDIYSDASVRVELAKNSMQADSVAEQKPVAENNMLTLYVVAPEGQQFRGDYVVQSLEALGFQYGEYQIFHRHQHMGNSASPVIFSVANMMQPGIFDLTKIEHFSTVGLVLFMHLPSEGNDVVNFKLLLKTTENLAQALGGFVLNEHREIFDENSRQSYLARVS</sequence>
<name>ZIPA_ACTPJ</name>
<protein>
    <recommendedName>
        <fullName evidence="1">Cell division protein ZipA</fullName>
    </recommendedName>
</protein>
<proteinExistence type="inferred from homology"/>
<organism>
    <name type="scientific">Actinobacillus pleuropneumoniae serotype 3 (strain JL03)</name>
    <dbReference type="NCBI Taxonomy" id="434271"/>
    <lineage>
        <taxon>Bacteria</taxon>
        <taxon>Pseudomonadati</taxon>
        <taxon>Pseudomonadota</taxon>
        <taxon>Gammaproteobacteria</taxon>
        <taxon>Pasteurellales</taxon>
        <taxon>Pasteurellaceae</taxon>
        <taxon>Actinobacillus</taxon>
    </lineage>
</organism>
<reference key="1">
    <citation type="journal article" date="2008" name="PLoS ONE">
        <title>Genome biology of Actinobacillus pleuropneumoniae JL03, an isolate of serotype 3 prevalent in China.</title>
        <authorList>
            <person name="Xu Z."/>
            <person name="Zhou Y."/>
            <person name="Li L."/>
            <person name="Zhou R."/>
            <person name="Xiao S."/>
            <person name="Wan Y."/>
            <person name="Zhang S."/>
            <person name="Wang K."/>
            <person name="Li W."/>
            <person name="Li L."/>
            <person name="Jin H."/>
            <person name="Kang M."/>
            <person name="Dalai B."/>
            <person name="Li T."/>
            <person name="Liu L."/>
            <person name="Cheng Y."/>
            <person name="Zhang L."/>
            <person name="Xu T."/>
            <person name="Zheng H."/>
            <person name="Pu S."/>
            <person name="Wang B."/>
            <person name="Gu W."/>
            <person name="Zhang X.L."/>
            <person name="Zhu G.-F."/>
            <person name="Wang S."/>
            <person name="Zhao G.-P."/>
            <person name="Chen H."/>
        </authorList>
    </citation>
    <scope>NUCLEOTIDE SEQUENCE [LARGE SCALE GENOMIC DNA]</scope>
    <source>
        <strain>JL03</strain>
    </source>
</reference>
<evidence type="ECO:0000255" key="1">
    <source>
        <dbReference type="HAMAP-Rule" id="MF_00509"/>
    </source>
</evidence>
<evidence type="ECO:0000256" key="2">
    <source>
        <dbReference type="SAM" id="MobiDB-lite"/>
    </source>
</evidence>
<comment type="function">
    <text evidence="1">Essential cell division protein that stabilizes the FtsZ protofilaments by cross-linking them and that serves as a cytoplasmic membrane anchor for the Z ring. Also required for the recruitment to the septal ring of downstream cell division proteins.</text>
</comment>
<comment type="subunit">
    <text evidence="1">Interacts with FtsZ via their C-terminal domains.</text>
</comment>
<comment type="subcellular location">
    <subcellularLocation>
        <location evidence="1">Cell inner membrane</location>
        <topology evidence="1">Single-pass type I membrane protein</topology>
    </subcellularLocation>
    <text evidence="1">Localizes to the Z ring in an FtsZ-dependent manner.</text>
</comment>
<comment type="similarity">
    <text evidence="1">Belongs to the ZipA family.</text>
</comment>